<comment type="function">
    <text evidence="1">Involved in the biosynthesis of the central metabolite phospho-alpha-D-ribosyl-1-pyrophosphate (PRPP) via the transfer of pyrophosphoryl group from ATP to 1-hydroxyl of ribose-5-phosphate (Rib-5-P).</text>
</comment>
<comment type="catalytic activity">
    <reaction evidence="1">
        <text>D-ribose 5-phosphate + ATP = 5-phospho-alpha-D-ribose 1-diphosphate + AMP + H(+)</text>
        <dbReference type="Rhea" id="RHEA:15609"/>
        <dbReference type="ChEBI" id="CHEBI:15378"/>
        <dbReference type="ChEBI" id="CHEBI:30616"/>
        <dbReference type="ChEBI" id="CHEBI:58017"/>
        <dbReference type="ChEBI" id="CHEBI:78346"/>
        <dbReference type="ChEBI" id="CHEBI:456215"/>
        <dbReference type="EC" id="2.7.6.1"/>
    </reaction>
</comment>
<comment type="cofactor">
    <cofactor evidence="1">
        <name>Mg(2+)</name>
        <dbReference type="ChEBI" id="CHEBI:18420"/>
    </cofactor>
    <text evidence="1">Binds 1 Mg(2+) ion per subunit.</text>
</comment>
<comment type="pathway">
    <text evidence="1">Metabolic intermediate biosynthesis; 5-phospho-alpha-D-ribose 1-diphosphate biosynthesis; 5-phospho-alpha-D-ribose 1-diphosphate from D-ribose 5-phosphate (route I): step 1/1.</text>
</comment>
<comment type="subunit">
    <text evidence="1">Homohexamer.</text>
</comment>
<comment type="subcellular location">
    <subcellularLocation>
        <location evidence="1">Cytoplasm</location>
    </subcellularLocation>
</comment>
<comment type="similarity">
    <text evidence="1">Belongs to the ribose-phosphate pyrophosphokinase family. Class I subfamily.</text>
</comment>
<comment type="caution">
    <text evidence="1">Part of a set of proteins in which some residues (ACT_SITE, NP_BIND, REGION and BINDING) are not conserved.</text>
</comment>
<keyword id="KW-0067">ATP-binding</keyword>
<keyword id="KW-0963">Cytoplasm</keyword>
<keyword id="KW-0418">Kinase</keyword>
<keyword id="KW-0460">Magnesium</keyword>
<keyword id="KW-0479">Metal-binding</keyword>
<keyword id="KW-0545">Nucleotide biosynthesis</keyword>
<keyword id="KW-0547">Nucleotide-binding</keyword>
<keyword id="KW-0808">Transferase</keyword>
<feature type="chain" id="PRO_0000141215" description="Putative ribose-phosphate pyrophosphokinase 2">
    <location>
        <begin position="1"/>
        <end position="326"/>
    </location>
</feature>
<feature type="binding site" evidence="1">
    <location>
        <begin position="43"/>
        <end position="45"/>
    </location>
    <ligand>
        <name>ATP</name>
        <dbReference type="ChEBI" id="CHEBI:30616"/>
    </ligand>
</feature>
<feature type="binding site" evidence="1">
    <location>
        <begin position="102"/>
        <end position="103"/>
    </location>
    <ligand>
        <name>ATP</name>
        <dbReference type="ChEBI" id="CHEBI:30616"/>
    </ligand>
</feature>
<feature type="binding site" evidence="1">
    <location>
        <position position="136"/>
    </location>
    <ligand>
        <name>Mg(2+)</name>
        <dbReference type="ChEBI" id="CHEBI:18420"/>
    </ligand>
</feature>
<feature type="binding site" evidence="1">
    <location>
        <position position="225"/>
    </location>
    <ligand>
        <name>D-ribose 5-phosphate</name>
        <dbReference type="ChEBI" id="CHEBI:78346"/>
    </ligand>
</feature>
<feature type="binding site" evidence="1">
    <location>
        <begin position="229"/>
        <end position="233"/>
    </location>
    <ligand>
        <name>D-ribose 5-phosphate</name>
        <dbReference type="ChEBI" id="CHEBI:78346"/>
    </ligand>
</feature>
<gene>
    <name evidence="1" type="primary">prs2</name>
    <name type="synonym">prsA.2</name>
    <name type="ordered locus">spyM18_1084</name>
</gene>
<organism>
    <name type="scientific">Streptococcus pyogenes serotype M18 (strain MGAS8232)</name>
    <dbReference type="NCBI Taxonomy" id="186103"/>
    <lineage>
        <taxon>Bacteria</taxon>
        <taxon>Bacillati</taxon>
        <taxon>Bacillota</taxon>
        <taxon>Bacilli</taxon>
        <taxon>Lactobacillales</taxon>
        <taxon>Streptococcaceae</taxon>
        <taxon>Streptococcus</taxon>
    </lineage>
</organism>
<sequence>MTERYADKQIKLFSLTSNLPIAEKIAKAAGIPLGKMSSRQFSDGEIMINIEETVRGDHIYIIQSTSFPVNDNLWELLIMIDACKRASANTVNIVLPYFGYSRQDRVAKPREPITAKLVANMLTKAGIDRVVTLDLHAVQVQGFFDIPVDNLFTVPLFAERYSKLGLSGSDVVVVSPKNSGIKRARSLAEYLDSPIAIIDYAQDDSEREQGYIIGDVSGKKAILIDDILNTGKTFAEAAKILERSGATDTYAVASHGLFAGGAADVLETAPIKEIIVTDSVKTKNRVPENVTYLSASDLIAEAIIRIHERKPLSPLFSYQPKGKNNA</sequence>
<proteinExistence type="inferred from homology"/>
<evidence type="ECO:0000255" key="1">
    <source>
        <dbReference type="HAMAP-Rule" id="MF_00583"/>
    </source>
</evidence>
<name>KPRS2_STRP8</name>
<protein>
    <recommendedName>
        <fullName evidence="1">Putative ribose-phosphate pyrophosphokinase 2</fullName>
        <shortName evidence="1">RPPK 2</shortName>
        <ecNumber evidence="1">2.7.6.1</ecNumber>
    </recommendedName>
    <alternativeName>
        <fullName evidence="1">5-phospho-D-ribosyl alpha-1-diphosphate synthase 2</fullName>
    </alternativeName>
    <alternativeName>
        <fullName evidence="1">Phosphoribosyl diphosphate synthase 2</fullName>
    </alternativeName>
    <alternativeName>
        <fullName evidence="1">Phosphoribosyl pyrophosphate synthase 2</fullName>
        <shortName evidence="1">P-Rib-PP synthase 2</shortName>
        <shortName evidence="1">PRPP synthase 2</shortName>
        <shortName evidence="1">PRPPase 2</shortName>
    </alternativeName>
</protein>
<accession>Q8P137</accession>
<dbReference type="EC" id="2.7.6.1" evidence="1"/>
<dbReference type="EMBL" id="AE009949">
    <property type="protein sequence ID" value="AAL97707.1"/>
    <property type="molecule type" value="Genomic_DNA"/>
</dbReference>
<dbReference type="RefSeq" id="WP_011017751.1">
    <property type="nucleotide sequence ID" value="NC_003485.1"/>
</dbReference>
<dbReference type="SMR" id="Q8P137"/>
<dbReference type="KEGG" id="spm:spyM18_1084"/>
<dbReference type="HOGENOM" id="CLU_033546_2_0_9"/>
<dbReference type="UniPathway" id="UPA00087">
    <property type="reaction ID" value="UER00172"/>
</dbReference>
<dbReference type="GO" id="GO:0005737">
    <property type="term" value="C:cytoplasm"/>
    <property type="evidence" value="ECO:0007669"/>
    <property type="project" value="UniProtKB-SubCell"/>
</dbReference>
<dbReference type="GO" id="GO:0002189">
    <property type="term" value="C:ribose phosphate diphosphokinase complex"/>
    <property type="evidence" value="ECO:0007669"/>
    <property type="project" value="TreeGrafter"/>
</dbReference>
<dbReference type="GO" id="GO:0005524">
    <property type="term" value="F:ATP binding"/>
    <property type="evidence" value="ECO:0007669"/>
    <property type="project" value="UniProtKB-KW"/>
</dbReference>
<dbReference type="GO" id="GO:0016301">
    <property type="term" value="F:kinase activity"/>
    <property type="evidence" value="ECO:0007669"/>
    <property type="project" value="UniProtKB-KW"/>
</dbReference>
<dbReference type="GO" id="GO:0000287">
    <property type="term" value="F:magnesium ion binding"/>
    <property type="evidence" value="ECO:0007669"/>
    <property type="project" value="UniProtKB-UniRule"/>
</dbReference>
<dbReference type="GO" id="GO:0004749">
    <property type="term" value="F:ribose phosphate diphosphokinase activity"/>
    <property type="evidence" value="ECO:0007669"/>
    <property type="project" value="UniProtKB-UniRule"/>
</dbReference>
<dbReference type="GO" id="GO:0006015">
    <property type="term" value="P:5-phosphoribose 1-diphosphate biosynthetic process"/>
    <property type="evidence" value="ECO:0007669"/>
    <property type="project" value="UniProtKB-UniRule"/>
</dbReference>
<dbReference type="GO" id="GO:0006164">
    <property type="term" value="P:purine nucleotide biosynthetic process"/>
    <property type="evidence" value="ECO:0007669"/>
    <property type="project" value="TreeGrafter"/>
</dbReference>
<dbReference type="GO" id="GO:0009156">
    <property type="term" value="P:ribonucleoside monophosphate biosynthetic process"/>
    <property type="evidence" value="ECO:0007669"/>
    <property type="project" value="InterPro"/>
</dbReference>
<dbReference type="CDD" id="cd06223">
    <property type="entry name" value="PRTases_typeI"/>
    <property type="match status" value="1"/>
</dbReference>
<dbReference type="FunFam" id="3.40.50.2020:FF:000001">
    <property type="entry name" value="Ribose-phosphate pyrophosphokinase"/>
    <property type="match status" value="1"/>
</dbReference>
<dbReference type="Gene3D" id="3.40.50.2020">
    <property type="match status" value="2"/>
</dbReference>
<dbReference type="HAMAP" id="MF_00583_B">
    <property type="entry name" value="RibP_PPkinase_B"/>
    <property type="match status" value="1"/>
</dbReference>
<dbReference type="InterPro" id="IPR000842">
    <property type="entry name" value="PRib_PP_synth_CS"/>
</dbReference>
<dbReference type="InterPro" id="IPR029099">
    <property type="entry name" value="Pribosyltran_N"/>
</dbReference>
<dbReference type="InterPro" id="IPR000836">
    <property type="entry name" value="PRibTrfase_dom"/>
</dbReference>
<dbReference type="InterPro" id="IPR029057">
    <property type="entry name" value="PRTase-like"/>
</dbReference>
<dbReference type="InterPro" id="IPR005946">
    <property type="entry name" value="Rib-P_diPkinase"/>
</dbReference>
<dbReference type="InterPro" id="IPR037515">
    <property type="entry name" value="Rib-P_diPkinase_bac"/>
</dbReference>
<dbReference type="NCBIfam" id="NF002320">
    <property type="entry name" value="PRK01259.1"/>
    <property type="match status" value="1"/>
</dbReference>
<dbReference type="NCBIfam" id="NF002686">
    <property type="entry name" value="PRK02458.1"/>
    <property type="match status" value="1"/>
</dbReference>
<dbReference type="NCBIfam" id="TIGR01251">
    <property type="entry name" value="ribP_PPkin"/>
    <property type="match status" value="1"/>
</dbReference>
<dbReference type="PANTHER" id="PTHR10210">
    <property type="entry name" value="RIBOSE-PHOSPHATE DIPHOSPHOKINASE FAMILY MEMBER"/>
    <property type="match status" value="1"/>
</dbReference>
<dbReference type="PANTHER" id="PTHR10210:SF41">
    <property type="entry name" value="RIBOSE-PHOSPHATE PYROPHOSPHOKINASE 1, CHLOROPLASTIC"/>
    <property type="match status" value="1"/>
</dbReference>
<dbReference type="Pfam" id="PF14572">
    <property type="entry name" value="Pribosyl_synth"/>
    <property type="match status" value="1"/>
</dbReference>
<dbReference type="Pfam" id="PF13793">
    <property type="entry name" value="Pribosyltran_N"/>
    <property type="match status" value="1"/>
</dbReference>
<dbReference type="SMART" id="SM01400">
    <property type="entry name" value="Pribosyltran_N"/>
    <property type="match status" value="1"/>
</dbReference>
<dbReference type="SUPFAM" id="SSF53271">
    <property type="entry name" value="PRTase-like"/>
    <property type="match status" value="2"/>
</dbReference>
<dbReference type="PROSITE" id="PS00114">
    <property type="entry name" value="PRPP_SYNTHASE"/>
    <property type="match status" value="1"/>
</dbReference>
<reference key="1">
    <citation type="journal article" date="2002" name="Proc. Natl. Acad. Sci. U.S.A.">
        <title>Genome sequence and comparative microarray analysis of serotype M18 group A Streptococcus strains associated with acute rheumatic fever outbreaks.</title>
        <authorList>
            <person name="Smoot J.C."/>
            <person name="Barbian K.D."/>
            <person name="Van Gompel J.J."/>
            <person name="Smoot L.M."/>
            <person name="Chaussee M.S."/>
            <person name="Sylva G.L."/>
            <person name="Sturdevant D.E."/>
            <person name="Ricklefs S.M."/>
            <person name="Porcella S.F."/>
            <person name="Parkins L.D."/>
            <person name="Beres S.B."/>
            <person name="Campbell D.S."/>
            <person name="Smith T.M."/>
            <person name="Zhang Q."/>
            <person name="Kapur V."/>
            <person name="Daly J.A."/>
            <person name="Veasy L.G."/>
            <person name="Musser J.M."/>
        </authorList>
    </citation>
    <scope>NUCLEOTIDE SEQUENCE [LARGE SCALE GENOMIC DNA]</scope>
    <source>
        <strain>MGAS8232</strain>
    </source>
</reference>